<organism>
    <name type="scientific">Mus musculus</name>
    <name type="common">Mouse</name>
    <dbReference type="NCBI Taxonomy" id="10090"/>
    <lineage>
        <taxon>Eukaryota</taxon>
        <taxon>Metazoa</taxon>
        <taxon>Chordata</taxon>
        <taxon>Craniata</taxon>
        <taxon>Vertebrata</taxon>
        <taxon>Euteleostomi</taxon>
        <taxon>Mammalia</taxon>
        <taxon>Eutheria</taxon>
        <taxon>Euarchontoglires</taxon>
        <taxon>Glires</taxon>
        <taxon>Rodentia</taxon>
        <taxon>Myomorpha</taxon>
        <taxon>Muroidea</taxon>
        <taxon>Muridae</taxon>
        <taxon>Murinae</taxon>
        <taxon>Mus</taxon>
        <taxon>Mus</taxon>
    </lineage>
</organism>
<gene>
    <name type="primary">Sult2b1</name>
    <name type="synonym">Sult2b</name>
</gene>
<proteinExistence type="evidence at protein level"/>
<comment type="function">
    <text evidence="2 5">Sulfotransferase that utilizes 3'-phospho-5'-adenylyl sulfate (PAPS) as sulfonate donor to catalyze the sulfate conjugation. Preferentially sulfonates cholesterol (PubMed:12639899). Catalyzes sulfation of the 3beta-hydroxyl groups of steroids, such as, pregnenolone and dehydroepiandrosterone (DHEA). Cholesterol sulfation is approximately 10-fold higher than for pregnenolone and 20-fold higher than for DHEA (PubMed:12639899). Plays a role in epidermal cholesterol metabolism and in the regulation of epidermal proliferation and differentiation (By similarity).</text>
</comment>
<comment type="function">
    <molecule>Isoform 2</molecule>
    <text evidence="5">Strongly sulfonates pregnenolone, however is capable to sulfonate cholesterol with a high degree of efficiency. DHEA is a relatively poor substrate.</text>
</comment>
<comment type="catalytic activity">
    <reaction evidence="5">
        <text>an alcohol + 3'-phosphoadenylyl sulfate = an alkyl sulfate + adenosine 3',5'-bisphosphate + H(+)</text>
        <dbReference type="Rhea" id="RHEA:22552"/>
        <dbReference type="ChEBI" id="CHEBI:15378"/>
        <dbReference type="ChEBI" id="CHEBI:30879"/>
        <dbReference type="ChEBI" id="CHEBI:58339"/>
        <dbReference type="ChEBI" id="CHEBI:58343"/>
        <dbReference type="ChEBI" id="CHEBI:83414"/>
        <dbReference type="EC" id="2.8.2.2"/>
    </reaction>
</comment>
<comment type="catalytic activity">
    <reaction evidence="5">
        <text>pregnenolone + 3'-phosphoadenylyl sulfate = pregnenolone sulfate + adenosine 3',5'-bisphosphate + H(+)</text>
        <dbReference type="Rhea" id="RHEA:52356"/>
        <dbReference type="ChEBI" id="CHEBI:15378"/>
        <dbReference type="ChEBI" id="CHEBI:16581"/>
        <dbReference type="ChEBI" id="CHEBI:58339"/>
        <dbReference type="ChEBI" id="CHEBI:58343"/>
        <dbReference type="ChEBI" id="CHEBI:133000"/>
    </reaction>
</comment>
<comment type="catalytic activity">
    <reaction evidence="5 6">
        <text>3beta-hydroxyandrost-5-en-17-one + 3'-phosphoadenylyl sulfate = dehydroepiandrosterone 3-sulfate + adenosine 3',5'-bisphosphate + H(+)</text>
        <dbReference type="Rhea" id="RHEA:51216"/>
        <dbReference type="ChEBI" id="CHEBI:15378"/>
        <dbReference type="ChEBI" id="CHEBI:28689"/>
        <dbReference type="ChEBI" id="CHEBI:57905"/>
        <dbReference type="ChEBI" id="CHEBI:58339"/>
        <dbReference type="ChEBI" id="CHEBI:58343"/>
    </reaction>
</comment>
<comment type="catalytic activity">
    <reaction evidence="5">
        <text>cholesterol + 3'-phosphoadenylyl sulfate = cholesterol sulfate + adenosine 3',5'-bisphosphate + H(+)</text>
        <dbReference type="Rhea" id="RHEA:52368"/>
        <dbReference type="ChEBI" id="CHEBI:15378"/>
        <dbReference type="ChEBI" id="CHEBI:16113"/>
        <dbReference type="ChEBI" id="CHEBI:58339"/>
        <dbReference type="ChEBI" id="CHEBI:58343"/>
        <dbReference type="ChEBI" id="CHEBI:136579"/>
    </reaction>
</comment>
<comment type="biophysicochemical properties">
    <kinetics>
        <KM evidence="5">0.88 uM for cholesterol (isoform 2)</KM>
        <KM evidence="5">17.7 uM for pregnenolone (isoform 2)</KM>
        <KM evidence="5">0.87 uM for cholesterol (isoform 1)</KM>
        <KM evidence="5">16.7 uM for pregnenolone (isoform 1)</KM>
        <KM evidence="5">19.7 uM for 3beta-hydroxyandrost-5-en-17-one (DHEA)(isoform 1)</KM>
    </kinetics>
</comment>
<comment type="subcellular location">
    <subcellularLocation>
        <location evidence="2">Cytoplasm</location>
        <location evidence="2">Cytosol</location>
    </subcellularLocation>
    <subcellularLocation>
        <location evidence="2">Microsome</location>
    </subcellularLocation>
    <subcellularLocation>
        <location evidence="2">Nucleus</location>
    </subcellularLocation>
</comment>
<comment type="alternative products">
    <event type="alternative splicing"/>
    <isoform>
        <id>O35400-1</id>
        <name>1</name>
        <name>SULT2B1b</name>
        <name>B</name>
        <sequence type="displayed"/>
    </isoform>
    <isoform>
        <id>O35400-2</id>
        <name>2</name>
        <name>SULT2B1a</name>
        <name>A</name>
        <sequence type="described" ref="VSP_012511"/>
    </isoform>
</comment>
<comment type="tissue specificity">
    <text evidence="5 6">Expressed at high levels in epididymis, intestine and uterus, and low levels in brain and hypothalamus (PubMed:9647753). Isoform 2 is most prominent in the brain and spinal cord, with modest expression in the lung, skin and spleen (PubMed:12639899). Isoform 1 is most prominently expressed in skin and small intestine, with modest expression in muscle and prostate (PubMed:12639899).</text>
</comment>
<comment type="developmental stage">
    <text evidence="5">Isoform 1 and isoform 2 are expressed from stages 8.5-19 dpc.</text>
</comment>
<comment type="similarity">
    <text evidence="8">Belongs to the sulfotransferase 1 family.</text>
</comment>
<reference key="1">
    <citation type="journal article" date="1998" name="Biochem. Biophys. Res. Commun.">
        <title>Molecular cloning, expression, and functional characterization of novel mouse sulfotransferases.</title>
        <authorList>
            <person name="Sakakibara Y."/>
            <person name="Yanagisawa K."/>
            <person name="Takami Y."/>
            <person name="Nakayama T."/>
            <person name="Suiko M."/>
            <person name="Liu M.-C."/>
        </authorList>
    </citation>
    <scope>NUCLEOTIDE SEQUENCE [MRNA] (ISOFORM 1)</scope>
    <scope>TISSUE SPECIFICITY</scope>
    <scope>CATALYTIC ACTIVITY</scope>
    <scope>FUNCTION</scope>
</reference>
<reference key="2">
    <citation type="journal article" date="2003" name="Endocrinology">
        <title>Conservation of the hydroxysteroid sulfotransferase SULT2B1 gene structure in the mouse: pre- and postnatal expression, kinetic analysis of isoforms, and comparison with prototypical SULT2A1.</title>
        <authorList>
            <person name="Shimizu C."/>
            <person name="Fuda H."/>
            <person name="Yanai H."/>
            <person name="Strott C.A."/>
        </authorList>
    </citation>
    <scope>NUCLEOTIDE SEQUENCE [MRNA] (ISOFORM 2)</scope>
    <scope>DEVELOPMENTAL STAGE</scope>
    <scope>TISSUE SPECIFICITY</scope>
    <scope>CATALYTIC ACTIVITY</scope>
    <scope>BIOPHYSICOCHEMICAL PROPERTIES (ISOFORMS 1 AND 2)</scope>
    <source>
        <strain>C57BL/6J</strain>
    </source>
</reference>
<reference key="3">
    <citation type="journal article" date="2004" name="Genome Res.">
        <title>The status, quality, and expansion of the NIH full-length cDNA project: the Mammalian Gene Collection (MGC).</title>
        <authorList>
            <consortium name="The MGC Project Team"/>
        </authorList>
    </citation>
    <scope>NUCLEOTIDE SEQUENCE [LARGE SCALE MRNA] (ISOFORM 1)</scope>
    <source>
        <strain>C57BL/6J</strain>
        <strain>Czech II</strain>
        <strain>FVB/N</strain>
        <tissue>Mammary gland</tissue>
    </source>
</reference>
<protein>
    <recommendedName>
        <fullName>Sulfotransferase 2B1</fullName>
        <ecNumber evidence="5 6">2.8.2.2</ecNumber>
    </recommendedName>
    <alternativeName>
        <fullName>Alcohol sulfotransferase</fullName>
    </alternativeName>
    <alternativeName>
        <fullName>Hydroxysteroid sulfotransferase 2</fullName>
    </alternativeName>
    <alternativeName>
        <fullName>Sulfotransferase family cytosolic 2B member 1</fullName>
        <shortName>ST2B1</shortName>
    </alternativeName>
</protein>
<evidence type="ECO:0000250" key="1"/>
<evidence type="ECO:0000250" key="2">
    <source>
        <dbReference type="UniProtKB" id="O00204"/>
    </source>
</evidence>
<evidence type="ECO:0000250" key="3">
    <source>
        <dbReference type="UniProtKB" id="P49891"/>
    </source>
</evidence>
<evidence type="ECO:0000256" key="4">
    <source>
        <dbReference type="SAM" id="MobiDB-lite"/>
    </source>
</evidence>
<evidence type="ECO:0000269" key="5">
    <source>
    </source>
</evidence>
<evidence type="ECO:0000269" key="6">
    <source>
    </source>
</evidence>
<evidence type="ECO:0000303" key="7">
    <source>
    </source>
</evidence>
<evidence type="ECO:0000305" key="8"/>
<feature type="chain" id="PRO_0000085150" description="Sulfotransferase 2B1">
    <location>
        <begin position="1"/>
        <end position="338"/>
    </location>
</feature>
<feature type="region of interest" description="Disordered" evidence="4">
    <location>
        <begin position="301"/>
        <end position="338"/>
    </location>
</feature>
<feature type="compositionally biased region" description="Low complexity" evidence="4">
    <location>
        <begin position="327"/>
        <end position="338"/>
    </location>
</feature>
<feature type="active site" description="Proton acceptor" evidence="3">
    <location>
        <position position="122"/>
    </location>
</feature>
<feature type="binding site" evidence="3">
    <location>
        <begin position="67"/>
        <end position="72"/>
    </location>
    <ligand>
        <name>3'-phosphoadenylyl sulfate</name>
        <dbReference type="ChEBI" id="CHEBI:58339"/>
    </ligand>
</feature>
<feature type="binding site" evidence="1">
    <location>
        <position position="95"/>
    </location>
    <ligand>
        <name>substrate</name>
    </ligand>
</feature>
<feature type="binding site" evidence="1">
    <location>
        <position position="100"/>
    </location>
    <ligand>
        <name>substrate</name>
    </ligand>
</feature>
<feature type="binding site" evidence="3">
    <location>
        <position position="144"/>
    </location>
    <ligand>
        <name>3'-phosphoadenylyl sulfate</name>
        <dbReference type="ChEBI" id="CHEBI:58339"/>
    </ligand>
</feature>
<feature type="binding site" evidence="3">
    <location>
        <position position="152"/>
    </location>
    <ligand>
        <name>3'-phosphoadenylyl sulfate</name>
        <dbReference type="ChEBI" id="CHEBI:58339"/>
    </ligand>
</feature>
<feature type="binding site" evidence="3">
    <location>
        <position position="207"/>
    </location>
    <ligand>
        <name>3'-phosphoadenylyl sulfate</name>
        <dbReference type="ChEBI" id="CHEBI:58339"/>
    </ligand>
</feature>
<feature type="binding site" evidence="3">
    <location>
        <begin position="241"/>
        <end position="246"/>
    </location>
    <ligand>
        <name>3'-phosphoadenylyl sulfate</name>
        <dbReference type="ChEBI" id="CHEBI:58339"/>
    </ligand>
</feature>
<feature type="binding site" evidence="3">
    <location>
        <begin position="271"/>
        <end position="273"/>
    </location>
    <ligand>
        <name>3'-phosphoadenylyl sulfate</name>
        <dbReference type="ChEBI" id="CHEBI:58339"/>
    </ligand>
</feature>
<feature type="splice variant" id="VSP_012511" description="In isoform 2." evidence="7">
    <original>MDGPQPRALWSSSEKNVSEM</original>
    <variation>MTSRDCCCGGVEVDLLLRWTHGAQRKDTPHWRVNEGPCDSCPPPWSSLHVPFPSF</variation>
    <location>
        <begin position="1"/>
        <end position="20"/>
    </location>
</feature>
<feature type="sequence conflict" description="In Ref. 1; AAC69918." evidence="8" ref="1">
    <original>S</original>
    <variation>F</variation>
    <location>
        <position position="329"/>
    </location>
</feature>
<name>ST2B1_MOUSE</name>
<keyword id="KW-0025">Alternative splicing</keyword>
<keyword id="KW-0963">Cytoplasm</keyword>
<keyword id="KW-0256">Endoplasmic reticulum</keyword>
<keyword id="KW-0443">Lipid metabolism</keyword>
<keyword id="KW-0492">Microsome</keyword>
<keyword id="KW-0539">Nucleus</keyword>
<keyword id="KW-1185">Reference proteome</keyword>
<keyword id="KW-0753">Steroid metabolism</keyword>
<keyword id="KW-0808">Transferase</keyword>
<accession>O35400</accession>
<accession>Q8K472</accession>
<accession>Q91V03</accession>
<sequence length="338" mass="38347">MDGPQPRALWSSSEKNVSEMSWNFGGEYFRYKGIPFPVGMYSPESLSLAENTSNVRDDDIFIVTYPKSGTNWMIEIVCLILKDGDPSWIRSEPIWQRAPWCETIISAFNVLDRPSPRIMSSHLPIELFTKAFFSSKAKVIYVGRNPRDVVVSLYYYSKIAGQLKDPGTPDQFLQNFLKGEVQFGSWFDHIKGWIRMQNQENFLFITYEELQQDLRGSVQRICEFLGRPLGEEALSSVVAHSAFAAMKANTMSNYSLLPASLLDHRQGEFLRKGISGDWKNHFTVAQSEAFDSVYREQMHGVQRFPWDTSEEDSSPDGQPDPEPSPSPASDDPNPGSSQ</sequence>
<dbReference type="EC" id="2.8.2.2" evidence="5 6"/>
<dbReference type="EMBL" id="AF026072">
    <property type="protein sequence ID" value="AAC69918.1"/>
    <property type="molecule type" value="mRNA"/>
</dbReference>
<dbReference type="EMBL" id="AF478566">
    <property type="protein sequence ID" value="AAM46788.1"/>
    <property type="molecule type" value="mRNA"/>
</dbReference>
<dbReference type="EMBL" id="BC009811">
    <property type="protein sequence ID" value="AAH09811.1"/>
    <property type="molecule type" value="mRNA"/>
</dbReference>
<dbReference type="EMBL" id="BC009813">
    <property type="protein sequence ID" value="AAH09813.1"/>
    <property type="molecule type" value="mRNA"/>
</dbReference>
<dbReference type="CCDS" id="CCDS21263.1">
    <molecule id="O35400-1"/>
</dbReference>
<dbReference type="PIR" id="JE0196">
    <property type="entry name" value="JE0196"/>
</dbReference>
<dbReference type="RefSeq" id="NP_059493.2">
    <molecule id="O35400-1"/>
    <property type="nucleotide sequence ID" value="NM_017465.3"/>
</dbReference>
<dbReference type="SMR" id="O35400"/>
<dbReference type="FunCoup" id="O35400">
    <property type="interactions" value="1347"/>
</dbReference>
<dbReference type="IntAct" id="O35400">
    <property type="interactions" value="7"/>
</dbReference>
<dbReference type="MINT" id="O35400"/>
<dbReference type="STRING" id="10090.ENSMUSP00000075005"/>
<dbReference type="iPTMnet" id="O35400"/>
<dbReference type="PhosphoSitePlus" id="O35400"/>
<dbReference type="PaxDb" id="10090-ENSMUSP00000075005"/>
<dbReference type="PeptideAtlas" id="O35400"/>
<dbReference type="ProteomicsDB" id="254568">
    <molecule id="O35400-1"/>
</dbReference>
<dbReference type="ProteomicsDB" id="254569">
    <molecule id="O35400-2"/>
</dbReference>
<dbReference type="Pumba" id="O35400"/>
<dbReference type="Antibodypedia" id="31732">
    <property type="antibodies" value="262 antibodies from 28 providers"/>
</dbReference>
<dbReference type="DNASU" id="54200"/>
<dbReference type="Ensembl" id="ENSMUST00000075571.16">
    <molecule id="O35400-1"/>
    <property type="protein sequence ID" value="ENSMUSP00000075005.8"/>
    <property type="gene ID" value="ENSMUSG00000003271.18"/>
</dbReference>
<dbReference type="GeneID" id="54200"/>
<dbReference type="KEGG" id="mmu:54200"/>
<dbReference type="UCSC" id="uc009gxb.2">
    <molecule id="O35400-1"/>
    <property type="organism name" value="mouse"/>
</dbReference>
<dbReference type="AGR" id="MGI:1926342"/>
<dbReference type="CTD" id="6820"/>
<dbReference type="MGI" id="MGI:1926342">
    <property type="gene designation" value="Sult2b1"/>
</dbReference>
<dbReference type="VEuPathDB" id="HostDB:ENSMUSG00000003271"/>
<dbReference type="eggNOG" id="KOG1584">
    <property type="taxonomic scope" value="Eukaryota"/>
</dbReference>
<dbReference type="GeneTree" id="ENSGT00940000159269"/>
<dbReference type="HOGENOM" id="CLU_027239_1_0_1"/>
<dbReference type="InParanoid" id="O35400"/>
<dbReference type="OMA" id="DPYEKNI"/>
<dbReference type="PhylomeDB" id="O35400"/>
<dbReference type="TreeFam" id="TF321745"/>
<dbReference type="BRENDA" id="2.8.2.2">
    <property type="organism ID" value="3474"/>
</dbReference>
<dbReference type="Reactome" id="R-MMU-156584">
    <property type="pathway name" value="Cytosolic sulfonation of small molecules"/>
</dbReference>
<dbReference type="SABIO-RK" id="O35400"/>
<dbReference type="BioGRID-ORCS" id="54200">
    <property type="hits" value="0 hits in 80 CRISPR screens"/>
</dbReference>
<dbReference type="ChiTaRS" id="Sult2b1">
    <property type="organism name" value="mouse"/>
</dbReference>
<dbReference type="PRO" id="PR:O35400"/>
<dbReference type="Proteomes" id="UP000000589">
    <property type="component" value="Chromosome 7"/>
</dbReference>
<dbReference type="RNAct" id="O35400">
    <property type="molecule type" value="protein"/>
</dbReference>
<dbReference type="Bgee" id="ENSMUSG00000003271">
    <property type="expression patterns" value="Expressed in lip and 124 other cell types or tissues"/>
</dbReference>
<dbReference type="ExpressionAtlas" id="O35400">
    <property type="expression patterns" value="baseline and differential"/>
</dbReference>
<dbReference type="GO" id="GO:0005829">
    <property type="term" value="C:cytosol"/>
    <property type="evidence" value="ECO:0000250"/>
    <property type="project" value="UniProtKB"/>
</dbReference>
<dbReference type="GO" id="GO:0005783">
    <property type="term" value="C:endoplasmic reticulum"/>
    <property type="evidence" value="ECO:0007669"/>
    <property type="project" value="UniProtKB-KW"/>
</dbReference>
<dbReference type="GO" id="GO:0005634">
    <property type="term" value="C:nucleus"/>
    <property type="evidence" value="ECO:0007669"/>
    <property type="project" value="UniProtKB-SubCell"/>
</dbReference>
<dbReference type="GO" id="GO:0051922">
    <property type="term" value="F:cholesterol sulfotransferase activity"/>
    <property type="evidence" value="ECO:0007669"/>
    <property type="project" value="RHEA"/>
</dbReference>
<dbReference type="GO" id="GO:0008146">
    <property type="term" value="F:sulfotransferase activity"/>
    <property type="evidence" value="ECO:0000314"/>
    <property type="project" value="MGI"/>
</dbReference>
<dbReference type="GO" id="GO:0008203">
    <property type="term" value="P:cholesterol metabolic process"/>
    <property type="evidence" value="ECO:0000250"/>
    <property type="project" value="UniProtKB"/>
</dbReference>
<dbReference type="GO" id="GO:0000103">
    <property type="term" value="P:sulfate assimilation"/>
    <property type="evidence" value="ECO:0000314"/>
    <property type="project" value="MGI"/>
</dbReference>
<dbReference type="FunFam" id="3.40.50.300:FF:000433">
    <property type="entry name" value="Estrogen sulfotransferase"/>
    <property type="match status" value="1"/>
</dbReference>
<dbReference type="Gene3D" id="3.40.50.300">
    <property type="entry name" value="P-loop containing nucleotide triphosphate hydrolases"/>
    <property type="match status" value="1"/>
</dbReference>
<dbReference type="InterPro" id="IPR027417">
    <property type="entry name" value="P-loop_NTPase"/>
</dbReference>
<dbReference type="InterPro" id="IPR000863">
    <property type="entry name" value="Sulfotransferase_dom"/>
</dbReference>
<dbReference type="PANTHER" id="PTHR11783">
    <property type="entry name" value="SULFOTRANSFERASE SULT"/>
    <property type="match status" value="1"/>
</dbReference>
<dbReference type="Pfam" id="PF00685">
    <property type="entry name" value="Sulfotransfer_1"/>
    <property type="match status" value="1"/>
</dbReference>
<dbReference type="SUPFAM" id="SSF52540">
    <property type="entry name" value="P-loop containing nucleoside triphosphate hydrolases"/>
    <property type="match status" value="1"/>
</dbReference>